<organism>
    <name type="scientific">Aspergillus oryzae (strain ATCC 42149 / RIB 40)</name>
    <name type="common">Yellow koji mold</name>
    <dbReference type="NCBI Taxonomy" id="510516"/>
    <lineage>
        <taxon>Eukaryota</taxon>
        <taxon>Fungi</taxon>
        <taxon>Dikarya</taxon>
        <taxon>Ascomycota</taxon>
        <taxon>Pezizomycotina</taxon>
        <taxon>Eurotiomycetes</taxon>
        <taxon>Eurotiomycetidae</taxon>
        <taxon>Eurotiales</taxon>
        <taxon>Aspergillaceae</taxon>
        <taxon>Aspergillus</taxon>
        <taxon>Aspergillus subgen. Circumdati</taxon>
    </lineage>
</organism>
<dbReference type="EMBL" id="BA000055">
    <property type="protein sequence ID" value="BAE65392.1"/>
    <property type="molecule type" value="Genomic_DNA"/>
</dbReference>
<dbReference type="RefSeq" id="XP_001826525.1">
    <property type="nucleotide sequence ID" value="XM_001826473.2"/>
</dbReference>
<dbReference type="STRING" id="510516.Q2PIY2"/>
<dbReference type="EnsemblFungi" id="BAE65392">
    <property type="protein sequence ID" value="BAE65392"/>
    <property type="gene ID" value="AO090206000015"/>
</dbReference>
<dbReference type="GeneID" id="5998641"/>
<dbReference type="KEGG" id="aor:AO090206000015"/>
<dbReference type="VEuPathDB" id="FungiDB:AO090206000015"/>
<dbReference type="HOGENOM" id="CLU_131611_2_0_1"/>
<dbReference type="OMA" id="VNMKDEY"/>
<dbReference type="OrthoDB" id="86603at5052"/>
<dbReference type="Proteomes" id="UP000006564">
    <property type="component" value="Chromosome 7"/>
</dbReference>
<dbReference type="GO" id="GO:0005743">
    <property type="term" value="C:mitochondrial inner membrane"/>
    <property type="evidence" value="ECO:0007669"/>
    <property type="project" value="UniProtKB-SubCell"/>
</dbReference>
<dbReference type="GO" id="GO:0033617">
    <property type="term" value="P:mitochondrial cytochrome c oxidase assembly"/>
    <property type="evidence" value="ECO:0007669"/>
    <property type="project" value="TreeGrafter"/>
</dbReference>
<dbReference type="InterPro" id="IPR020164">
    <property type="entry name" value="Cyt_c_Oxase_assmbl_COX16"/>
</dbReference>
<dbReference type="PANTHER" id="PTHR17130:SF14">
    <property type="entry name" value="CYTOCHROME C OXIDASE ASSEMBLY PROTEIN COX16 HOMOLOG, MITOCHONDRIAL"/>
    <property type="match status" value="1"/>
</dbReference>
<dbReference type="PANTHER" id="PTHR17130">
    <property type="entry name" value="MITOCHONDRIAL OUTER MEMBRANE PROTEIN 25"/>
    <property type="match status" value="1"/>
</dbReference>
<dbReference type="Pfam" id="PF14138">
    <property type="entry name" value="COX16"/>
    <property type="match status" value="1"/>
</dbReference>
<evidence type="ECO:0000250" key="1">
    <source>
        <dbReference type="UniProtKB" id="P47081"/>
    </source>
</evidence>
<evidence type="ECO:0000255" key="2"/>
<evidence type="ECO:0000305" key="3"/>
<comment type="function">
    <text evidence="1">Required for the assembly of the mitochondrial respiratory chain complex IV (CIV), also known as cytochrome c oxidase. May participate in merging the COX1 and COX2 assembly lines.</text>
</comment>
<comment type="subcellular location">
    <subcellularLocation>
        <location evidence="1">Mitochondrion inner membrane</location>
        <topology evidence="1">Single-pass membrane protein</topology>
    </subcellularLocation>
</comment>
<comment type="similarity">
    <text evidence="3">Belongs to the COX16 family.</text>
</comment>
<accession>Q2PIY2</accession>
<gene>
    <name type="primary">cox16</name>
    <name type="ORF">AO090206000015</name>
</gene>
<name>COX16_ASPOR</name>
<reference key="1">
    <citation type="journal article" date="2005" name="Nature">
        <title>Genome sequencing and analysis of Aspergillus oryzae.</title>
        <authorList>
            <person name="Machida M."/>
            <person name="Asai K."/>
            <person name="Sano M."/>
            <person name="Tanaka T."/>
            <person name="Kumagai T."/>
            <person name="Terai G."/>
            <person name="Kusumoto K."/>
            <person name="Arima T."/>
            <person name="Akita O."/>
            <person name="Kashiwagi Y."/>
            <person name="Abe K."/>
            <person name="Gomi K."/>
            <person name="Horiuchi H."/>
            <person name="Kitamoto K."/>
            <person name="Kobayashi T."/>
            <person name="Takeuchi M."/>
            <person name="Denning D.W."/>
            <person name="Galagan J.E."/>
            <person name="Nierman W.C."/>
            <person name="Yu J."/>
            <person name="Archer D.B."/>
            <person name="Bennett J.W."/>
            <person name="Bhatnagar D."/>
            <person name="Cleveland T.E."/>
            <person name="Fedorova N.D."/>
            <person name="Gotoh O."/>
            <person name="Horikawa H."/>
            <person name="Hosoyama A."/>
            <person name="Ichinomiya M."/>
            <person name="Igarashi R."/>
            <person name="Iwashita K."/>
            <person name="Juvvadi P.R."/>
            <person name="Kato M."/>
            <person name="Kato Y."/>
            <person name="Kin T."/>
            <person name="Kokubun A."/>
            <person name="Maeda H."/>
            <person name="Maeyama N."/>
            <person name="Maruyama J."/>
            <person name="Nagasaki H."/>
            <person name="Nakajima T."/>
            <person name="Oda K."/>
            <person name="Okada K."/>
            <person name="Paulsen I."/>
            <person name="Sakamoto K."/>
            <person name="Sawano T."/>
            <person name="Takahashi M."/>
            <person name="Takase K."/>
            <person name="Terabayashi Y."/>
            <person name="Wortman J.R."/>
            <person name="Yamada O."/>
            <person name="Yamagata Y."/>
            <person name="Anazawa H."/>
            <person name="Hata Y."/>
            <person name="Koide Y."/>
            <person name="Komori T."/>
            <person name="Koyama Y."/>
            <person name="Minetoki T."/>
            <person name="Suharnan S."/>
            <person name="Tanaka A."/>
            <person name="Isono K."/>
            <person name="Kuhara S."/>
            <person name="Ogasawara N."/>
            <person name="Kikuchi H."/>
        </authorList>
    </citation>
    <scope>NUCLEOTIDE SEQUENCE [LARGE SCALE GENOMIC DNA]</scope>
    <source>
        <strain>ATCC 42149 / RIB 40</strain>
    </source>
</reference>
<keyword id="KW-0472">Membrane</keyword>
<keyword id="KW-0496">Mitochondrion</keyword>
<keyword id="KW-0999">Mitochondrion inner membrane</keyword>
<keyword id="KW-1185">Reference proteome</keyword>
<keyword id="KW-0809">Transit peptide</keyword>
<keyword id="KW-0812">Transmembrane</keyword>
<keyword id="KW-1133">Transmembrane helix</keyword>
<proteinExistence type="inferred from homology"/>
<sequence>MPVFQSKTFRRATTASSSLGERIGETYRARLPKHPFLLFGFPFVMIIVAGSFALTPAAALRYERYDRKVQQLSQEEAMNLGLRGPDGEEGIKRNPRRRIIGDEREEYYRLMAKDLDNWEQKRVQRFKGEPDGKL</sequence>
<protein>
    <recommendedName>
        <fullName>Cytochrome c oxidase assembly protein cox16, mitochondrial</fullName>
    </recommendedName>
</protein>
<feature type="transit peptide" description="Mitochondrion" evidence="2">
    <location>
        <begin position="1"/>
        <end position="12"/>
    </location>
</feature>
<feature type="chain" id="PRO_0000280641" description="Cytochrome c oxidase assembly protein cox16, mitochondrial">
    <location>
        <begin position="13"/>
        <end position="134"/>
    </location>
</feature>
<feature type="transmembrane region" description="Helical" evidence="2">
    <location>
        <begin position="35"/>
        <end position="55"/>
    </location>
</feature>